<dbReference type="EMBL" id="U72354">
    <property type="protein sequence ID" value="AAO49778.1"/>
    <property type="molecule type" value="Genomic_DNA"/>
</dbReference>
<dbReference type="EMBL" id="CP000712">
    <property type="protein sequence ID" value="ABQ79000.1"/>
    <property type="molecule type" value="Genomic_DNA"/>
</dbReference>
<dbReference type="SMR" id="Q849R1"/>
<dbReference type="KEGG" id="ppf:Pput_2869"/>
<dbReference type="eggNOG" id="COG1538">
    <property type="taxonomic scope" value="Bacteria"/>
</dbReference>
<dbReference type="HOGENOM" id="CLU_012817_13_3_6"/>
<dbReference type="GO" id="GO:0009279">
    <property type="term" value="C:cell outer membrane"/>
    <property type="evidence" value="ECO:0007669"/>
    <property type="project" value="UniProtKB-SubCell"/>
</dbReference>
<dbReference type="GO" id="GO:0015562">
    <property type="term" value="F:efflux transmembrane transporter activity"/>
    <property type="evidence" value="ECO:0007669"/>
    <property type="project" value="InterPro"/>
</dbReference>
<dbReference type="Gene3D" id="1.20.1600.10">
    <property type="entry name" value="Outer membrane efflux proteins (OEP)"/>
    <property type="match status" value="1"/>
</dbReference>
<dbReference type="Gene3D" id="2.20.200.10">
    <property type="entry name" value="Outer membrane efflux proteins (OEP)"/>
    <property type="match status" value="1"/>
</dbReference>
<dbReference type="InterPro" id="IPR050737">
    <property type="entry name" value="OMF"/>
</dbReference>
<dbReference type="InterPro" id="IPR003423">
    <property type="entry name" value="OMP_efflux"/>
</dbReference>
<dbReference type="InterPro" id="IPR010131">
    <property type="entry name" value="RND_efflux_OM_lipoprot_NodT"/>
</dbReference>
<dbReference type="NCBIfam" id="TIGR01845">
    <property type="entry name" value="outer_NodT"/>
    <property type="match status" value="1"/>
</dbReference>
<dbReference type="PANTHER" id="PTHR30203:SF32">
    <property type="entry name" value="CATION EFFLUX SYSTEM PROTEIN CUSC"/>
    <property type="match status" value="1"/>
</dbReference>
<dbReference type="PANTHER" id="PTHR30203">
    <property type="entry name" value="OUTER MEMBRANE CATION EFFLUX PROTEIN"/>
    <property type="match status" value="1"/>
</dbReference>
<dbReference type="Pfam" id="PF02321">
    <property type="entry name" value="OEP"/>
    <property type="match status" value="2"/>
</dbReference>
<dbReference type="SUPFAM" id="SSF56954">
    <property type="entry name" value="Outer membrane efflux proteins (OEP)"/>
    <property type="match status" value="1"/>
</dbReference>
<dbReference type="PROSITE" id="PS51257">
    <property type="entry name" value="PROKAR_LIPOPROTEIN"/>
    <property type="match status" value="1"/>
</dbReference>
<sequence>MKTHYLSIALSVALSGCSLIPDYQRPPAPIQAGWPQGEAYAKLKAGTHRPSQTRDAELNWQVFFRDPVMRELIATALNNNRDLRQTALNVEAYRALHRIERSALLPRANTGVGATRQRLPADLSPTGEAGIQSQYDTTLSMSYELDMFGRLRSLERAALQEYLAAAETQRSMQIALIADVAIAYLSWRSDQAQLDLARSTLASYENSLNLIKSSREVGTASALDVRQARSLVETARVQQTLYTRQVAQDMNALQLLLGTKLPADLPISDVLDQPLAALSTGLPADLLLHRPDIRAAEHRLLAANANIGAARAAFFPSITLTAAAGTASHELDGLFEGGSGLWAFMPRINLPIFTAGRLRGNLDYRNVIKDINVAEYEKSIQTAFREVADGLAARGTFGEQLQAQRDLVDNNQAYYKLAYQRYDEGVDNYLAVLDAQRELFAAQQQFLSDRLNQLSSEVRLFKALGGGWDNISSQPLTAQN</sequence>
<evidence type="ECO:0000255" key="1">
    <source>
        <dbReference type="PROSITE-ProRule" id="PRU00303"/>
    </source>
</evidence>
<evidence type="ECO:0000305" key="2"/>
<protein>
    <recommendedName>
        <fullName>Probable efflux pump outer membrane protein SepC</fullName>
    </recommendedName>
</protein>
<name>SEPC_PSEP1</name>
<reference key="1">
    <citation type="journal article" date="1997" name="Proc. Natl. Acad. Sci. U.S.A.">
        <title>A bacterial basic region leucine zipper histidine kinase regulating toluene degradation.</title>
        <authorList>
            <person name="Lau P.C."/>
            <person name="Wang Y."/>
            <person name="Patel A."/>
            <person name="Labbe D."/>
            <person name="Bergeron H."/>
            <person name="Brousseau R."/>
            <person name="Konishi Y."/>
            <person name="Rawlings M."/>
        </authorList>
    </citation>
    <scope>NUCLEOTIDE SEQUENCE [GENOMIC DNA]</scope>
</reference>
<reference key="2">
    <citation type="submission" date="2007-05" db="EMBL/GenBank/DDBJ databases">
        <title>Complete sequence of Pseudomonas putida F1.</title>
        <authorList>
            <consortium name="US DOE Joint Genome Institute"/>
            <person name="Copeland A."/>
            <person name="Lucas S."/>
            <person name="Lapidus A."/>
            <person name="Barry K."/>
            <person name="Detter J.C."/>
            <person name="Glavina del Rio T."/>
            <person name="Hammon N."/>
            <person name="Israni S."/>
            <person name="Dalin E."/>
            <person name="Tice H."/>
            <person name="Pitluck S."/>
            <person name="Chain P."/>
            <person name="Malfatti S."/>
            <person name="Shin M."/>
            <person name="Vergez L."/>
            <person name="Schmutz J."/>
            <person name="Larimer F."/>
            <person name="Land M."/>
            <person name="Hauser L."/>
            <person name="Kyrpides N."/>
            <person name="Lykidis A."/>
            <person name="Parales R."/>
            <person name="Richardson P."/>
        </authorList>
    </citation>
    <scope>NUCLEOTIDE SEQUENCE [LARGE SCALE GENOMIC DNA]</scope>
    <source>
        <strain>ATCC 700007 / DSM 6899 / JCM 31910 / BCRC 17059 / LMG 24140 / F1</strain>
    </source>
</reference>
<gene>
    <name type="primary">sepC</name>
    <name type="ordered locus">Pput_2869</name>
</gene>
<feature type="signal peptide" evidence="1">
    <location>
        <begin position="1"/>
        <end position="16"/>
    </location>
</feature>
<feature type="chain" id="PRO_0000031006" description="Probable efflux pump outer membrane protein SepC">
    <location>
        <begin position="17"/>
        <end position="480"/>
    </location>
</feature>
<feature type="lipid moiety-binding region" description="N-palmitoyl cysteine" evidence="1">
    <location>
        <position position="17"/>
    </location>
</feature>
<feature type="lipid moiety-binding region" description="S-diacylglycerol cysteine" evidence="1">
    <location>
        <position position="17"/>
    </location>
</feature>
<feature type="sequence conflict" description="In Ref. 1; AAO49778." evidence="2" ref="1">
    <original>ELF</original>
    <variation>DVV</variation>
    <location>
        <begin position="438"/>
        <end position="440"/>
    </location>
</feature>
<keyword id="KW-0998">Cell outer membrane</keyword>
<keyword id="KW-0449">Lipoprotein</keyword>
<keyword id="KW-0472">Membrane</keyword>
<keyword id="KW-0564">Palmitate</keyword>
<keyword id="KW-0732">Signal</keyword>
<keyword id="KW-0812">Transmembrane</keyword>
<keyword id="KW-1134">Transmembrane beta strand</keyword>
<keyword id="KW-0813">Transport</keyword>
<organism>
    <name type="scientific">Pseudomonas putida (strain ATCC 700007 / DSM 6899 / JCM 31910 / BCRC 17059 / LMG 24140 / F1)</name>
    <dbReference type="NCBI Taxonomy" id="351746"/>
    <lineage>
        <taxon>Bacteria</taxon>
        <taxon>Pseudomonadati</taxon>
        <taxon>Pseudomonadota</taxon>
        <taxon>Gammaproteobacteria</taxon>
        <taxon>Pseudomonadales</taxon>
        <taxon>Pseudomonadaceae</taxon>
        <taxon>Pseudomonas</taxon>
    </lineage>
</organism>
<accession>Q849R1</accession>
<accession>A5W4E0</accession>
<comment type="function">
    <text>Probable outer membrane component of the SepABC efflux pump with unknown specificity.</text>
</comment>
<comment type="subcellular location">
    <subcellularLocation>
        <location evidence="2">Cell outer membrane</location>
        <topology evidence="1">Lipid-anchor</topology>
    </subcellularLocation>
</comment>
<comment type="similarity">
    <text evidence="2">Belongs to the outer membrane factor (OMF) (TC 1.B.17) family.</text>
</comment>
<proteinExistence type="inferred from homology"/>